<evidence type="ECO:0000250" key="1">
    <source>
        <dbReference type="UniProtKB" id="P9WLP9"/>
    </source>
</evidence>
<evidence type="ECO:0000305" key="2"/>
<sequence length="442" mass="52149">MDLYRKAKRLKKELSKHEEINDSLKELAFDIFKELTVKPEFIDKNTNDVIGEEKINTSTFSNKERLDILIEWTIEIDPILSFIIDKCDIPIERTGGDDLDAFMENVYTEYIEELHKLPNRKSFDSSKITKIESFAQQITKTIELYLDGYVHLAYAEFDKGMNIFSEEVNIEELLLYNIDSIRIPCKFFRMRTSNTEVFSKDDMFHIPFEKRGIIRTNRFSIPGFPCLYLGSSSLVCWEELGRPDLNTTYTSVFHLEDEDIKILDLSVSPTELADNLKKFFEITFRRKIYKFNAYFMTWILISACLIRVKKQKDIFKPEYIIPQFLLEWVKQTESSEYWGICYLSSKINRQTIENYKLYKNYAIPVRQRKDSGHCSLLGETFQISDPVAWETFQSHKDSPESLPIKNPLFPETEGTHHDYHKTELGRLEAFLIRYRSVVKDQL</sequence>
<organism>
    <name type="scientific">Bacillus subtilis (strain 168)</name>
    <dbReference type="NCBI Taxonomy" id="224308"/>
    <lineage>
        <taxon>Bacteria</taxon>
        <taxon>Bacillati</taxon>
        <taxon>Bacillota</taxon>
        <taxon>Bacilli</taxon>
        <taxon>Bacillales</taxon>
        <taxon>Bacillaceae</taxon>
        <taxon>Bacillus</taxon>
    </lineage>
</organism>
<keyword id="KW-1185">Reference proteome</keyword>
<keyword id="KW-1277">Toxin-antitoxin system</keyword>
<name>YOPC_BACSU</name>
<dbReference type="EMBL" id="AL009126">
    <property type="protein sequence ID" value="CAB14012.1"/>
    <property type="molecule type" value="Genomic_DNA"/>
</dbReference>
<dbReference type="RefSeq" id="NP_389977.1">
    <property type="nucleotide sequence ID" value="NC_000964.3"/>
</dbReference>
<dbReference type="RefSeq" id="WP_004399370.1">
    <property type="nucleotide sequence ID" value="NZ_OZ025638.1"/>
</dbReference>
<dbReference type="SMR" id="O31935"/>
<dbReference type="FunCoup" id="O31935">
    <property type="interactions" value="44"/>
</dbReference>
<dbReference type="STRING" id="224308.BSU20940"/>
<dbReference type="PaxDb" id="224308-BSU20940"/>
<dbReference type="EnsemblBacteria" id="CAB14012">
    <property type="protein sequence ID" value="CAB14012"/>
    <property type="gene ID" value="BSU_20940"/>
</dbReference>
<dbReference type="GeneID" id="939177"/>
<dbReference type="KEGG" id="bsu:BSU20940"/>
<dbReference type="PATRIC" id="fig|224308.179.peg.2286"/>
<dbReference type="eggNOG" id="ENOG5032TMW">
    <property type="taxonomic scope" value="Bacteria"/>
</dbReference>
<dbReference type="InParanoid" id="O31935"/>
<dbReference type="OrthoDB" id="7068172at2"/>
<dbReference type="BioCyc" id="BSUB:BSU20940-MONOMER"/>
<dbReference type="Proteomes" id="UP000001570">
    <property type="component" value="Chromosome"/>
</dbReference>
<reference key="1">
    <citation type="journal article" date="1997" name="Nature">
        <title>The complete genome sequence of the Gram-positive bacterium Bacillus subtilis.</title>
        <authorList>
            <person name="Kunst F."/>
            <person name="Ogasawara N."/>
            <person name="Moszer I."/>
            <person name="Albertini A.M."/>
            <person name="Alloni G."/>
            <person name="Azevedo V."/>
            <person name="Bertero M.G."/>
            <person name="Bessieres P."/>
            <person name="Bolotin A."/>
            <person name="Borchert S."/>
            <person name="Borriss R."/>
            <person name="Boursier L."/>
            <person name="Brans A."/>
            <person name="Braun M."/>
            <person name="Brignell S.C."/>
            <person name="Bron S."/>
            <person name="Brouillet S."/>
            <person name="Bruschi C.V."/>
            <person name="Caldwell B."/>
            <person name="Capuano V."/>
            <person name="Carter N.M."/>
            <person name="Choi S.-K."/>
            <person name="Codani J.-J."/>
            <person name="Connerton I.F."/>
            <person name="Cummings N.J."/>
            <person name="Daniel R.A."/>
            <person name="Denizot F."/>
            <person name="Devine K.M."/>
            <person name="Duesterhoeft A."/>
            <person name="Ehrlich S.D."/>
            <person name="Emmerson P.T."/>
            <person name="Entian K.-D."/>
            <person name="Errington J."/>
            <person name="Fabret C."/>
            <person name="Ferrari E."/>
            <person name="Foulger D."/>
            <person name="Fritz C."/>
            <person name="Fujita M."/>
            <person name="Fujita Y."/>
            <person name="Fuma S."/>
            <person name="Galizzi A."/>
            <person name="Galleron N."/>
            <person name="Ghim S.-Y."/>
            <person name="Glaser P."/>
            <person name="Goffeau A."/>
            <person name="Golightly E.J."/>
            <person name="Grandi G."/>
            <person name="Guiseppi G."/>
            <person name="Guy B.J."/>
            <person name="Haga K."/>
            <person name="Haiech J."/>
            <person name="Harwood C.R."/>
            <person name="Henaut A."/>
            <person name="Hilbert H."/>
            <person name="Holsappel S."/>
            <person name="Hosono S."/>
            <person name="Hullo M.-F."/>
            <person name="Itaya M."/>
            <person name="Jones L.-M."/>
            <person name="Joris B."/>
            <person name="Karamata D."/>
            <person name="Kasahara Y."/>
            <person name="Klaerr-Blanchard M."/>
            <person name="Klein C."/>
            <person name="Kobayashi Y."/>
            <person name="Koetter P."/>
            <person name="Koningstein G."/>
            <person name="Krogh S."/>
            <person name="Kumano M."/>
            <person name="Kurita K."/>
            <person name="Lapidus A."/>
            <person name="Lardinois S."/>
            <person name="Lauber J."/>
            <person name="Lazarevic V."/>
            <person name="Lee S.-M."/>
            <person name="Levine A."/>
            <person name="Liu H."/>
            <person name="Masuda S."/>
            <person name="Mauel C."/>
            <person name="Medigue C."/>
            <person name="Medina N."/>
            <person name="Mellado R.P."/>
            <person name="Mizuno M."/>
            <person name="Moestl D."/>
            <person name="Nakai S."/>
            <person name="Noback M."/>
            <person name="Noone D."/>
            <person name="O'Reilly M."/>
            <person name="Ogawa K."/>
            <person name="Ogiwara A."/>
            <person name="Oudega B."/>
            <person name="Park S.-H."/>
            <person name="Parro V."/>
            <person name="Pohl T.M."/>
            <person name="Portetelle D."/>
            <person name="Porwollik S."/>
            <person name="Prescott A.M."/>
            <person name="Presecan E."/>
            <person name="Pujic P."/>
            <person name="Purnelle B."/>
            <person name="Rapoport G."/>
            <person name="Rey M."/>
            <person name="Reynolds S."/>
            <person name="Rieger M."/>
            <person name="Rivolta C."/>
            <person name="Rocha E."/>
            <person name="Roche B."/>
            <person name="Rose M."/>
            <person name="Sadaie Y."/>
            <person name="Sato T."/>
            <person name="Scanlan E."/>
            <person name="Schleich S."/>
            <person name="Schroeter R."/>
            <person name="Scoffone F."/>
            <person name="Sekiguchi J."/>
            <person name="Sekowska A."/>
            <person name="Seror S.J."/>
            <person name="Serror P."/>
            <person name="Shin B.-S."/>
            <person name="Soldo B."/>
            <person name="Sorokin A."/>
            <person name="Tacconi E."/>
            <person name="Takagi T."/>
            <person name="Takahashi H."/>
            <person name="Takemaru K."/>
            <person name="Takeuchi M."/>
            <person name="Tamakoshi A."/>
            <person name="Tanaka T."/>
            <person name="Terpstra P."/>
            <person name="Tognoni A."/>
            <person name="Tosato V."/>
            <person name="Uchiyama S."/>
            <person name="Vandenbol M."/>
            <person name="Vannier F."/>
            <person name="Vassarotti A."/>
            <person name="Viari A."/>
            <person name="Wambutt R."/>
            <person name="Wedler E."/>
            <person name="Wedler H."/>
            <person name="Weitzenegger T."/>
            <person name="Winters P."/>
            <person name="Wipat A."/>
            <person name="Yamamoto H."/>
            <person name="Yamane K."/>
            <person name="Yasumoto K."/>
            <person name="Yata K."/>
            <person name="Yoshida K."/>
            <person name="Yoshikawa H.-F."/>
            <person name="Zumstein E."/>
            <person name="Yoshikawa H."/>
            <person name="Danchin A."/>
        </authorList>
    </citation>
    <scope>NUCLEOTIDE SEQUENCE [LARGE SCALE GENOMIC DNA]</scope>
    <source>
        <strain>168</strain>
    </source>
</reference>
<proteinExistence type="inferred from homology"/>
<feature type="chain" id="PRO_0000360461" description="Putative toxin YopC">
    <location>
        <begin position="1"/>
        <end position="442"/>
    </location>
</feature>
<protein>
    <recommendedName>
        <fullName evidence="2">Putative toxin YopC</fullName>
    </recommendedName>
    <alternativeName>
        <fullName>SPbeta prophage-derived protein YopC</fullName>
    </alternativeName>
</protein>
<comment type="function">
    <text evidence="1">May be the toxic component of a type II toxin-antitoxin (TA) system. Neutralized by its cognate antitoxin YopB.</text>
</comment>
<comment type="subunit">
    <text evidence="1">Forms a complex with cognate antitoxin YopB.</text>
</comment>
<comment type="similarity">
    <text evidence="2">In the C-terminal section; belongs to the MbcT/ParT/Res family.</text>
</comment>
<gene>
    <name type="primary">yopC</name>
    <name type="ordered locus">BSU20940</name>
</gene>
<accession>O31935</accession>